<reference key="1">
    <citation type="journal article" date="2006" name="PLoS Genet.">
        <title>Genome sequence of Rickettsia bellii illuminates the role of amoebae in gene exchanges between intracellular pathogens.</title>
        <authorList>
            <person name="Ogata H."/>
            <person name="La Scola B."/>
            <person name="Audic S."/>
            <person name="Renesto P."/>
            <person name="Blanc G."/>
            <person name="Robert C."/>
            <person name="Fournier P.-E."/>
            <person name="Claverie J.-M."/>
            <person name="Raoult D."/>
        </authorList>
    </citation>
    <scope>NUCLEOTIDE SEQUENCE [LARGE SCALE GENOMIC DNA]</scope>
    <source>
        <strain>RML369-C</strain>
    </source>
</reference>
<dbReference type="EMBL" id="CP000087">
    <property type="protein sequence ID" value="ABE05195.1"/>
    <property type="molecule type" value="Genomic_DNA"/>
</dbReference>
<dbReference type="RefSeq" id="WP_011477773.1">
    <property type="nucleotide sequence ID" value="NC_007940.1"/>
</dbReference>
<dbReference type="SMR" id="Q1RHG9"/>
<dbReference type="KEGG" id="rbe:RBE_1114"/>
<dbReference type="eggNOG" id="COG0484">
    <property type="taxonomic scope" value="Bacteria"/>
</dbReference>
<dbReference type="HOGENOM" id="CLU_017633_0_7_5"/>
<dbReference type="OrthoDB" id="9779889at2"/>
<dbReference type="Proteomes" id="UP000001951">
    <property type="component" value="Chromosome"/>
</dbReference>
<dbReference type="GO" id="GO:0005737">
    <property type="term" value="C:cytoplasm"/>
    <property type="evidence" value="ECO:0007669"/>
    <property type="project" value="UniProtKB-SubCell"/>
</dbReference>
<dbReference type="GO" id="GO:0005524">
    <property type="term" value="F:ATP binding"/>
    <property type="evidence" value="ECO:0007669"/>
    <property type="project" value="InterPro"/>
</dbReference>
<dbReference type="GO" id="GO:0031072">
    <property type="term" value="F:heat shock protein binding"/>
    <property type="evidence" value="ECO:0007669"/>
    <property type="project" value="InterPro"/>
</dbReference>
<dbReference type="GO" id="GO:0051082">
    <property type="term" value="F:unfolded protein binding"/>
    <property type="evidence" value="ECO:0007669"/>
    <property type="project" value="UniProtKB-UniRule"/>
</dbReference>
<dbReference type="GO" id="GO:0008270">
    <property type="term" value="F:zinc ion binding"/>
    <property type="evidence" value="ECO:0007669"/>
    <property type="project" value="UniProtKB-UniRule"/>
</dbReference>
<dbReference type="GO" id="GO:0051085">
    <property type="term" value="P:chaperone cofactor-dependent protein refolding"/>
    <property type="evidence" value="ECO:0007669"/>
    <property type="project" value="TreeGrafter"/>
</dbReference>
<dbReference type="GO" id="GO:0006260">
    <property type="term" value="P:DNA replication"/>
    <property type="evidence" value="ECO:0007669"/>
    <property type="project" value="UniProtKB-KW"/>
</dbReference>
<dbReference type="GO" id="GO:0042026">
    <property type="term" value="P:protein refolding"/>
    <property type="evidence" value="ECO:0007669"/>
    <property type="project" value="TreeGrafter"/>
</dbReference>
<dbReference type="GO" id="GO:0009408">
    <property type="term" value="P:response to heat"/>
    <property type="evidence" value="ECO:0007669"/>
    <property type="project" value="InterPro"/>
</dbReference>
<dbReference type="CDD" id="cd06257">
    <property type="entry name" value="DnaJ"/>
    <property type="match status" value="1"/>
</dbReference>
<dbReference type="CDD" id="cd10747">
    <property type="entry name" value="DnaJ_C"/>
    <property type="match status" value="1"/>
</dbReference>
<dbReference type="FunFam" id="1.10.287.110:FF:000153">
    <property type="entry name" value="Chaperone protein DnaJ"/>
    <property type="match status" value="1"/>
</dbReference>
<dbReference type="FunFam" id="2.10.230.10:FF:000002">
    <property type="entry name" value="Molecular chaperone DnaJ"/>
    <property type="match status" value="1"/>
</dbReference>
<dbReference type="FunFam" id="2.60.260.20:FF:000004">
    <property type="entry name" value="Molecular chaperone DnaJ"/>
    <property type="match status" value="1"/>
</dbReference>
<dbReference type="Gene3D" id="1.10.287.110">
    <property type="entry name" value="DnaJ domain"/>
    <property type="match status" value="1"/>
</dbReference>
<dbReference type="Gene3D" id="2.10.230.10">
    <property type="entry name" value="Heat shock protein DnaJ, cysteine-rich domain"/>
    <property type="match status" value="1"/>
</dbReference>
<dbReference type="Gene3D" id="2.60.260.20">
    <property type="entry name" value="Urease metallochaperone UreE, N-terminal domain"/>
    <property type="match status" value="2"/>
</dbReference>
<dbReference type="HAMAP" id="MF_01152">
    <property type="entry name" value="DnaJ"/>
    <property type="match status" value="1"/>
</dbReference>
<dbReference type="InterPro" id="IPR012724">
    <property type="entry name" value="DnaJ"/>
</dbReference>
<dbReference type="InterPro" id="IPR002939">
    <property type="entry name" value="DnaJ_C"/>
</dbReference>
<dbReference type="InterPro" id="IPR001623">
    <property type="entry name" value="DnaJ_domain"/>
</dbReference>
<dbReference type="InterPro" id="IPR018253">
    <property type="entry name" value="DnaJ_domain_CS"/>
</dbReference>
<dbReference type="InterPro" id="IPR008971">
    <property type="entry name" value="HSP40/DnaJ_pept-bd"/>
</dbReference>
<dbReference type="InterPro" id="IPR001305">
    <property type="entry name" value="HSP_DnaJ_Cys-rich_dom"/>
</dbReference>
<dbReference type="InterPro" id="IPR036410">
    <property type="entry name" value="HSP_DnaJ_Cys-rich_dom_sf"/>
</dbReference>
<dbReference type="InterPro" id="IPR036869">
    <property type="entry name" value="J_dom_sf"/>
</dbReference>
<dbReference type="NCBIfam" id="TIGR02349">
    <property type="entry name" value="DnaJ_bact"/>
    <property type="match status" value="1"/>
</dbReference>
<dbReference type="NCBIfam" id="NF008035">
    <property type="entry name" value="PRK10767.1"/>
    <property type="match status" value="1"/>
</dbReference>
<dbReference type="NCBIfam" id="NF010893">
    <property type="entry name" value="PRK14300.1"/>
    <property type="match status" value="1"/>
</dbReference>
<dbReference type="PANTHER" id="PTHR43096">
    <property type="entry name" value="DNAJ HOMOLOG 1, MITOCHONDRIAL-RELATED"/>
    <property type="match status" value="1"/>
</dbReference>
<dbReference type="PANTHER" id="PTHR43096:SF52">
    <property type="entry name" value="DNAJ HOMOLOG 1, MITOCHONDRIAL-RELATED"/>
    <property type="match status" value="1"/>
</dbReference>
<dbReference type="Pfam" id="PF00226">
    <property type="entry name" value="DnaJ"/>
    <property type="match status" value="1"/>
</dbReference>
<dbReference type="Pfam" id="PF01556">
    <property type="entry name" value="DnaJ_C"/>
    <property type="match status" value="1"/>
</dbReference>
<dbReference type="Pfam" id="PF00684">
    <property type="entry name" value="DnaJ_CXXCXGXG"/>
    <property type="match status" value="1"/>
</dbReference>
<dbReference type="PRINTS" id="PR00625">
    <property type="entry name" value="JDOMAIN"/>
</dbReference>
<dbReference type="SMART" id="SM00271">
    <property type="entry name" value="DnaJ"/>
    <property type="match status" value="1"/>
</dbReference>
<dbReference type="SUPFAM" id="SSF46565">
    <property type="entry name" value="Chaperone J-domain"/>
    <property type="match status" value="1"/>
</dbReference>
<dbReference type="SUPFAM" id="SSF57938">
    <property type="entry name" value="DnaJ/Hsp40 cysteine-rich domain"/>
    <property type="match status" value="1"/>
</dbReference>
<dbReference type="SUPFAM" id="SSF49493">
    <property type="entry name" value="HSP40/DnaJ peptide-binding domain"/>
    <property type="match status" value="2"/>
</dbReference>
<dbReference type="PROSITE" id="PS00636">
    <property type="entry name" value="DNAJ_1"/>
    <property type="match status" value="1"/>
</dbReference>
<dbReference type="PROSITE" id="PS50076">
    <property type="entry name" value="DNAJ_2"/>
    <property type="match status" value="1"/>
</dbReference>
<dbReference type="PROSITE" id="PS51188">
    <property type="entry name" value="ZF_CR"/>
    <property type="match status" value="1"/>
</dbReference>
<feature type="chain" id="PRO_0000277920" description="Chaperone protein DnaJ">
    <location>
        <begin position="1"/>
        <end position="376"/>
    </location>
</feature>
<feature type="domain" description="J" evidence="1">
    <location>
        <begin position="4"/>
        <end position="70"/>
    </location>
</feature>
<feature type="repeat" description="CXXCXGXG motif">
    <location>
        <begin position="152"/>
        <end position="159"/>
    </location>
</feature>
<feature type="repeat" description="CXXCXGXG motif">
    <location>
        <begin position="169"/>
        <end position="176"/>
    </location>
</feature>
<feature type="repeat" description="CXXCXGXG motif">
    <location>
        <begin position="191"/>
        <end position="198"/>
    </location>
</feature>
<feature type="repeat" description="CXXCXGXG motif">
    <location>
        <begin position="205"/>
        <end position="212"/>
    </location>
</feature>
<feature type="zinc finger region" description="CR-type" evidence="1">
    <location>
        <begin position="139"/>
        <end position="217"/>
    </location>
</feature>
<feature type="binding site" evidence="1">
    <location>
        <position position="152"/>
    </location>
    <ligand>
        <name>Zn(2+)</name>
        <dbReference type="ChEBI" id="CHEBI:29105"/>
        <label>1</label>
    </ligand>
</feature>
<feature type="binding site" evidence="1">
    <location>
        <position position="155"/>
    </location>
    <ligand>
        <name>Zn(2+)</name>
        <dbReference type="ChEBI" id="CHEBI:29105"/>
        <label>1</label>
    </ligand>
</feature>
<feature type="binding site" evidence="1">
    <location>
        <position position="169"/>
    </location>
    <ligand>
        <name>Zn(2+)</name>
        <dbReference type="ChEBI" id="CHEBI:29105"/>
        <label>2</label>
    </ligand>
</feature>
<feature type="binding site" evidence="1">
    <location>
        <position position="172"/>
    </location>
    <ligand>
        <name>Zn(2+)</name>
        <dbReference type="ChEBI" id="CHEBI:29105"/>
        <label>2</label>
    </ligand>
</feature>
<feature type="binding site" evidence="1">
    <location>
        <position position="191"/>
    </location>
    <ligand>
        <name>Zn(2+)</name>
        <dbReference type="ChEBI" id="CHEBI:29105"/>
        <label>2</label>
    </ligand>
</feature>
<feature type="binding site" evidence="1">
    <location>
        <position position="194"/>
    </location>
    <ligand>
        <name>Zn(2+)</name>
        <dbReference type="ChEBI" id="CHEBI:29105"/>
        <label>2</label>
    </ligand>
</feature>
<feature type="binding site" evidence="1">
    <location>
        <position position="205"/>
    </location>
    <ligand>
        <name>Zn(2+)</name>
        <dbReference type="ChEBI" id="CHEBI:29105"/>
        <label>1</label>
    </ligand>
</feature>
<feature type="binding site" evidence="1">
    <location>
        <position position="208"/>
    </location>
    <ligand>
        <name>Zn(2+)</name>
        <dbReference type="ChEBI" id="CHEBI:29105"/>
        <label>1</label>
    </ligand>
</feature>
<proteinExistence type="inferred from homology"/>
<gene>
    <name evidence="1" type="primary">dnaJ</name>
    <name type="ordered locus">RBE_1114</name>
</gene>
<protein>
    <recommendedName>
        <fullName evidence="1">Chaperone protein DnaJ</fullName>
    </recommendedName>
</protein>
<sequence>MSQDYYQILGVSKTANSADLKKAYHKLAKQYHPDNAASGDTNAEKKFKEINAAYEVLKDEQKRAAYDRFGHDAFQNQQARGGAGSQGGHPFGADINDIFGDFFSDFMGGGGRRKPTSSKVRGSDLKYNLTINLEEAFHGVEKNISFSSEVKCDTCHGSGSEKGETTTTCDACGGVGATRVQQGFFMIEQTCHKCQGNGQIIKNPCKKCHGLGRYHKQRNLSVNIPAGVENGTRIRHPGEGEAGIRGGNNGDLYVDIAIKPHDIYKVDGANLHCKLPISFVNAALGGEVAVPVIEGGKVNLTIPAGTQNGDQLRLCGKGMSKIRSTIRGDMLAHVHVEVPKNLSKRQRELLEELRGESANEKENDGSFFNKMKSLWS</sequence>
<accession>Q1RHG9</accession>
<keyword id="KW-0143">Chaperone</keyword>
<keyword id="KW-0963">Cytoplasm</keyword>
<keyword id="KW-0235">DNA replication</keyword>
<keyword id="KW-0479">Metal-binding</keyword>
<keyword id="KW-0677">Repeat</keyword>
<keyword id="KW-0346">Stress response</keyword>
<keyword id="KW-0862">Zinc</keyword>
<keyword id="KW-0863">Zinc-finger</keyword>
<comment type="function">
    <text evidence="1">Participates actively in the response to hyperosmotic and heat shock by preventing the aggregation of stress-denatured proteins and by disaggregating proteins, also in an autonomous, DnaK-independent fashion. Unfolded proteins bind initially to DnaJ; upon interaction with the DnaJ-bound protein, DnaK hydrolyzes its bound ATP, resulting in the formation of a stable complex. GrpE releases ADP from DnaK; ATP binding to DnaK triggers the release of the substrate protein, thus completing the reaction cycle. Several rounds of ATP-dependent interactions between DnaJ, DnaK and GrpE are required for fully efficient folding. Also involved, together with DnaK and GrpE, in the DNA replication of plasmids through activation of initiation proteins.</text>
</comment>
<comment type="cofactor">
    <cofactor evidence="1">
        <name>Zn(2+)</name>
        <dbReference type="ChEBI" id="CHEBI:29105"/>
    </cofactor>
    <text evidence="1">Binds 2 Zn(2+) ions per monomer.</text>
</comment>
<comment type="subunit">
    <text evidence="1">Homodimer.</text>
</comment>
<comment type="subcellular location">
    <subcellularLocation>
        <location evidence="1">Cytoplasm</location>
    </subcellularLocation>
</comment>
<comment type="domain">
    <text evidence="1">The J domain is necessary and sufficient to stimulate DnaK ATPase activity. Zinc center 1 plays an important role in the autonomous, DnaK-independent chaperone activity of DnaJ. Zinc center 2 is essential for interaction with DnaK and for DnaJ activity.</text>
</comment>
<comment type="similarity">
    <text evidence="1">Belongs to the DnaJ family.</text>
</comment>
<evidence type="ECO:0000255" key="1">
    <source>
        <dbReference type="HAMAP-Rule" id="MF_01152"/>
    </source>
</evidence>
<organism>
    <name type="scientific">Rickettsia bellii (strain RML369-C)</name>
    <dbReference type="NCBI Taxonomy" id="336407"/>
    <lineage>
        <taxon>Bacteria</taxon>
        <taxon>Pseudomonadati</taxon>
        <taxon>Pseudomonadota</taxon>
        <taxon>Alphaproteobacteria</taxon>
        <taxon>Rickettsiales</taxon>
        <taxon>Rickettsiaceae</taxon>
        <taxon>Rickettsieae</taxon>
        <taxon>Rickettsia</taxon>
        <taxon>belli group</taxon>
    </lineage>
</organism>
<name>DNAJ_RICBR</name>